<sequence>MAARNCTKALRPLARQLATPAVQRRTFVAAASAVRASVAVKAVAAPARQQVRGVKTMDFAGHKEEVHERADWPAEKLLDYFKNDTLALIGYGSQGHGQGLNLRDNGLNVIVGVRKNGKSWEDAIQDGWVPGKNLFDVDEAISRGTIVMNLLSDAAQSETWPHIKPQITKGKTLYFSHGFSPVFKDLTKVEVPTDVDVILVAPKGSGRTVRSLFREGRGINSSFAVYQDVTGKAKEKAVALGVAVGSGYLYETTFEKEVYSDLYGERGCLMGGIHGMFLAQYEVLRERGHSPSEAFNETVEEATQSLYPLIGAHGMDWMFDACSTTARRGAIDWTPKFKDALKPVFNNLYDSVKNGDETKRSLEYNSQPDYRERYEAELDEIRNLEIWRAGKAVRSLRPENQK</sequence>
<feature type="transit peptide" description="Mitochondrion" evidence="2">
    <location>
        <begin position="1"/>
        <end position="26"/>
    </location>
</feature>
<feature type="chain" id="PRO_0000015632" description="Ketol-acid reductoisomerase, mitochondrial">
    <location>
        <begin position="27"/>
        <end position="402"/>
    </location>
</feature>
<feature type="domain" description="KARI N-terminal Rossmann" evidence="3">
    <location>
        <begin position="63"/>
        <end position="252"/>
    </location>
</feature>
<feature type="domain" description="KARI C-terminal knotted" evidence="4">
    <location>
        <begin position="253"/>
        <end position="400"/>
    </location>
</feature>
<feature type="active site" evidence="2">
    <location>
        <position position="177"/>
    </location>
</feature>
<feature type="binding site" evidence="2">
    <location>
        <begin position="90"/>
        <end position="99"/>
    </location>
    <ligand>
        <name>NADP(+)</name>
        <dbReference type="ChEBI" id="CHEBI:58349"/>
    </ligand>
</feature>
<feature type="binding site" evidence="1">
    <location>
        <begin position="114"/>
        <end position="119"/>
    </location>
    <ligand>
        <name>NADP(+)</name>
        <dbReference type="ChEBI" id="CHEBI:58349"/>
    </ligand>
</feature>
<feature type="binding site" evidence="1">
    <location>
        <begin position="152"/>
        <end position="156"/>
    </location>
    <ligand>
        <name>NADP(+)</name>
        <dbReference type="ChEBI" id="CHEBI:58349"/>
    </ligand>
</feature>
<feature type="binding site" evidence="4">
    <location>
        <position position="261"/>
    </location>
    <ligand>
        <name>Mg(2+)</name>
        <dbReference type="ChEBI" id="CHEBI:18420"/>
        <label>1</label>
    </ligand>
</feature>
<feature type="binding site" evidence="4">
    <location>
        <position position="261"/>
    </location>
    <ligand>
        <name>Mg(2+)</name>
        <dbReference type="ChEBI" id="CHEBI:18420"/>
        <label>2</label>
    </ligand>
</feature>
<feature type="binding site" evidence="4">
    <location>
        <position position="265"/>
    </location>
    <ligand>
        <name>Mg(2+)</name>
        <dbReference type="ChEBI" id="CHEBI:18420"/>
        <label>1</label>
    </ligand>
</feature>
<feature type="binding site" evidence="4">
    <location>
        <position position="297"/>
    </location>
    <ligand>
        <name>Mg(2+)</name>
        <dbReference type="ChEBI" id="CHEBI:18420"/>
        <label>2</label>
    </ligand>
</feature>
<feature type="binding site" evidence="4">
    <location>
        <position position="301"/>
    </location>
    <ligand>
        <name>Mg(2+)</name>
        <dbReference type="ChEBI" id="CHEBI:18420"/>
        <label>2</label>
    </ligand>
</feature>
<feature type="binding site" evidence="4">
    <location>
        <position position="323"/>
    </location>
    <ligand>
        <name>substrate</name>
    </ligand>
</feature>
<feature type="sequence conflict" description="In Ref. 1; AAB00797." evidence="5" ref="1">
    <original>T</original>
    <variation>R</variation>
    <location>
        <position position="358"/>
    </location>
</feature>
<feature type="sequence conflict" description="In Ref. 1; AAB00797." evidence="5" ref="1">
    <location>
        <begin position="392"/>
        <end position="393"/>
    </location>
</feature>
<reference key="1">
    <citation type="journal article" date="1992" name="Gene">
        <title>Characterization of the ilv-2 gene from Neurospora crassa encoding alpha-keto-beta-hydroxylacyl reductoisomerase.</title>
        <authorList>
            <person name="Sista H."/>
            <person name="Bowman B."/>
        </authorList>
    </citation>
    <scope>NUCLEOTIDE SEQUENCE [GENOMIC DNA]</scope>
</reference>
<reference key="2">
    <citation type="journal article" date="2003" name="Nucleic Acids Res.">
        <title>What's in the genome of a filamentous fungus? Analysis of the Neurospora genome sequence.</title>
        <authorList>
            <person name="Mannhaupt G."/>
            <person name="Montrone C."/>
            <person name="Haase D."/>
            <person name="Mewes H.-W."/>
            <person name="Aign V."/>
            <person name="Hoheisel J.D."/>
            <person name="Fartmann B."/>
            <person name="Nyakatura G."/>
            <person name="Kempken F."/>
            <person name="Maier J."/>
            <person name="Schulte U."/>
        </authorList>
    </citation>
    <scope>NUCLEOTIDE SEQUENCE [LARGE SCALE GENOMIC DNA]</scope>
    <source>
        <strain>ATCC 24698 / 74-OR23-1A / CBS 708.71 / DSM 1257 / FGSC 987</strain>
    </source>
</reference>
<reference key="3">
    <citation type="journal article" date="2003" name="Nature">
        <title>The genome sequence of the filamentous fungus Neurospora crassa.</title>
        <authorList>
            <person name="Galagan J.E."/>
            <person name="Calvo S.E."/>
            <person name="Borkovich K.A."/>
            <person name="Selker E.U."/>
            <person name="Read N.D."/>
            <person name="Jaffe D.B."/>
            <person name="FitzHugh W."/>
            <person name="Ma L.-J."/>
            <person name="Smirnov S."/>
            <person name="Purcell S."/>
            <person name="Rehman B."/>
            <person name="Elkins T."/>
            <person name="Engels R."/>
            <person name="Wang S."/>
            <person name="Nielsen C.B."/>
            <person name="Butler J."/>
            <person name="Endrizzi M."/>
            <person name="Qui D."/>
            <person name="Ianakiev P."/>
            <person name="Bell-Pedersen D."/>
            <person name="Nelson M.A."/>
            <person name="Werner-Washburne M."/>
            <person name="Selitrennikoff C.P."/>
            <person name="Kinsey J.A."/>
            <person name="Braun E.L."/>
            <person name="Zelter A."/>
            <person name="Schulte U."/>
            <person name="Kothe G.O."/>
            <person name="Jedd G."/>
            <person name="Mewes H.-W."/>
            <person name="Staben C."/>
            <person name="Marcotte E."/>
            <person name="Greenberg D."/>
            <person name="Roy A."/>
            <person name="Foley K."/>
            <person name="Naylor J."/>
            <person name="Stange-Thomann N."/>
            <person name="Barrett R."/>
            <person name="Gnerre S."/>
            <person name="Kamal M."/>
            <person name="Kamvysselis M."/>
            <person name="Mauceli E.W."/>
            <person name="Bielke C."/>
            <person name="Rudd S."/>
            <person name="Frishman D."/>
            <person name="Krystofova S."/>
            <person name="Rasmussen C."/>
            <person name="Metzenberg R.L."/>
            <person name="Perkins D.D."/>
            <person name="Kroken S."/>
            <person name="Cogoni C."/>
            <person name="Macino G."/>
            <person name="Catcheside D.E.A."/>
            <person name="Li W."/>
            <person name="Pratt R.J."/>
            <person name="Osmani S.A."/>
            <person name="DeSouza C.P.C."/>
            <person name="Glass N.L."/>
            <person name="Orbach M.J."/>
            <person name="Berglund J.A."/>
            <person name="Voelker R."/>
            <person name="Yarden O."/>
            <person name="Plamann M."/>
            <person name="Seiler S."/>
            <person name="Dunlap J.C."/>
            <person name="Radford A."/>
            <person name="Aramayo R."/>
            <person name="Natvig D.O."/>
            <person name="Alex L.A."/>
            <person name="Mannhaupt G."/>
            <person name="Ebbole D.J."/>
            <person name="Freitag M."/>
            <person name="Paulsen I."/>
            <person name="Sachs M.S."/>
            <person name="Lander E.S."/>
            <person name="Nusbaum C."/>
            <person name="Birren B.W."/>
        </authorList>
    </citation>
    <scope>NUCLEOTIDE SEQUENCE [LARGE SCALE GENOMIC DNA]</scope>
    <source>
        <strain>ATCC 24698 / 74-OR23-1A / CBS 708.71 / DSM 1257 / FGSC 987</strain>
    </source>
</reference>
<name>ILV5_NEUCR</name>
<gene>
    <name type="primary">ilv-2</name>
    <name type="ORF">B11H24.150</name>
    <name type="ORF">NCU03608</name>
</gene>
<comment type="catalytic activity">
    <reaction>
        <text>(2R)-2,3-dihydroxy-3-methylbutanoate + NADP(+) = (2S)-2-acetolactate + NADPH + H(+)</text>
        <dbReference type="Rhea" id="RHEA:22068"/>
        <dbReference type="ChEBI" id="CHEBI:15378"/>
        <dbReference type="ChEBI" id="CHEBI:49072"/>
        <dbReference type="ChEBI" id="CHEBI:57783"/>
        <dbReference type="ChEBI" id="CHEBI:58349"/>
        <dbReference type="ChEBI" id="CHEBI:58476"/>
        <dbReference type="EC" id="1.1.1.86"/>
    </reaction>
</comment>
<comment type="catalytic activity">
    <reaction>
        <text>(2R,3R)-2,3-dihydroxy-3-methylpentanoate + NADP(+) = (S)-2-ethyl-2-hydroxy-3-oxobutanoate + NADPH + H(+)</text>
        <dbReference type="Rhea" id="RHEA:13493"/>
        <dbReference type="ChEBI" id="CHEBI:15378"/>
        <dbReference type="ChEBI" id="CHEBI:49256"/>
        <dbReference type="ChEBI" id="CHEBI:49258"/>
        <dbReference type="ChEBI" id="CHEBI:57783"/>
        <dbReference type="ChEBI" id="CHEBI:58349"/>
        <dbReference type="EC" id="1.1.1.86"/>
    </reaction>
</comment>
<comment type="cofactor">
    <cofactor evidence="1">
        <name>Mg(2+)</name>
        <dbReference type="ChEBI" id="CHEBI:18420"/>
    </cofactor>
    <text evidence="1">Binds 2 magnesium ions per subunit.</text>
</comment>
<comment type="pathway">
    <text>Amino-acid biosynthesis; L-isoleucine biosynthesis; L-isoleucine from 2-oxobutanoate: step 2/4.</text>
</comment>
<comment type="pathway">
    <text>Amino-acid biosynthesis; L-valine biosynthesis; L-valine from pyruvate: step 2/4.</text>
</comment>
<comment type="subcellular location">
    <subcellularLocation>
        <location>Mitochondrion</location>
    </subcellularLocation>
</comment>
<comment type="similarity">
    <text evidence="5">Belongs to the ketol-acid reductoisomerase family.</text>
</comment>
<organism>
    <name type="scientific">Neurospora crassa (strain ATCC 24698 / 74-OR23-1A / CBS 708.71 / DSM 1257 / FGSC 987)</name>
    <dbReference type="NCBI Taxonomy" id="367110"/>
    <lineage>
        <taxon>Eukaryota</taxon>
        <taxon>Fungi</taxon>
        <taxon>Dikarya</taxon>
        <taxon>Ascomycota</taxon>
        <taxon>Pezizomycotina</taxon>
        <taxon>Sordariomycetes</taxon>
        <taxon>Sordariomycetidae</taxon>
        <taxon>Sordariales</taxon>
        <taxon>Sordariaceae</taxon>
        <taxon>Neurospora</taxon>
    </lineage>
</organism>
<proteinExistence type="inferred from homology"/>
<dbReference type="EC" id="1.1.1.86"/>
<dbReference type="EMBL" id="M84189">
    <property type="protein sequence ID" value="AAB00797.1"/>
    <property type="molecule type" value="Genomic_DNA"/>
</dbReference>
<dbReference type="EMBL" id="AL670005">
    <property type="protein sequence ID" value="CAD21284.1"/>
    <property type="molecule type" value="Genomic_DNA"/>
</dbReference>
<dbReference type="EMBL" id="CM002240">
    <property type="protein sequence ID" value="EAA32099.1"/>
    <property type="molecule type" value="Genomic_DNA"/>
</dbReference>
<dbReference type="PIR" id="JC1428">
    <property type="entry name" value="JC1428"/>
</dbReference>
<dbReference type="RefSeq" id="XP_961335.1">
    <property type="nucleotide sequence ID" value="XM_956242.3"/>
</dbReference>
<dbReference type="SMR" id="P38674"/>
<dbReference type="FunCoup" id="P38674">
    <property type="interactions" value="628"/>
</dbReference>
<dbReference type="STRING" id="367110.P38674"/>
<dbReference type="PaxDb" id="5141-EFNCRP00000003426"/>
<dbReference type="EnsemblFungi" id="EAA32099">
    <property type="protein sequence ID" value="EAA32099"/>
    <property type="gene ID" value="NCU03608"/>
</dbReference>
<dbReference type="GeneID" id="3877517"/>
<dbReference type="KEGG" id="ncr:NCU03608"/>
<dbReference type="VEuPathDB" id="FungiDB:NCU03608"/>
<dbReference type="HOGENOM" id="CLU_033821_1_2_1"/>
<dbReference type="InParanoid" id="P38674"/>
<dbReference type="OMA" id="RAMFSWL"/>
<dbReference type="OrthoDB" id="10255643at2759"/>
<dbReference type="UniPathway" id="UPA00047">
    <property type="reaction ID" value="UER00056"/>
</dbReference>
<dbReference type="UniPathway" id="UPA00049">
    <property type="reaction ID" value="UER00060"/>
</dbReference>
<dbReference type="Proteomes" id="UP000001805">
    <property type="component" value="Chromosome 2, Linkage Group V"/>
</dbReference>
<dbReference type="GO" id="GO:0042645">
    <property type="term" value="C:mitochondrial nucleoid"/>
    <property type="evidence" value="ECO:0007669"/>
    <property type="project" value="EnsemblFungi"/>
</dbReference>
<dbReference type="GO" id="GO:0005739">
    <property type="term" value="C:mitochondrion"/>
    <property type="evidence" value="ECO:0000318"/>
    <property type="project" value="GO_Central"/>
</dbReference>
<dbReference type="GO" id="GO:0003690">
    <property type="term" value="F:double-stranded DNA binding"/>
    <property type="evidence" value="ECO:0007669"/>
    <property type="project" value="EnsemblFungi"/>
</dbReference>
<dbReference type="GO" id="GO:0004455">
    <property type="term" value="F:ketol-acid reductoisomerase activity"/>
    <property type="evidence" value="ECO:0000318"/>
    <property type="project" value="GO_Central"/>
</dbReference>
<dbReference type="GO" id="GO:0046872">
    <property type="term" value="F:metal ion binding"/>
    <property type="evidence" value="ECO:0007669"/>
    <property type="project" value="UniProtKB-KW"/>
</dbReference>
<dbReference type="GO" id="GO:0009097">
    <property type="term" value="P:isoleucine biosynthetic process"/>
    <property type="evidence" value="ECO:0000318"/>
    <property type="project" value="GO_Central"/>
</dbReference>
<dbReference type="GO" id="GO:0009099">
    <property type="term" value="P:L-valine biosynthetic process"/>
    <property type="evidence" value="ECO:0000318"/>
    <property type="project" value="GO_Central"/>
</dbReference>
<dbReference type="GO" id="GO:0000002">
    <property type="term" value="P:mitochondrial genome maintenance"/>
    <property type="evidence" value="ECO:0007669"/>
    <property type="project" value="EnsemblFungi"/>
</dbReference>
<dbReference type="FunFam" id="1.10.1040.10:FF:000003">
    <property type="entry name" value="Ketol-acid reductoisomerase, mitochondrial"/>
    <property type="match status" value="1"/>
</dbReference>
<dbReference type="FunFam" id="1.10.1040.10:FF:000005">
    <property type="entry name" value="Ketol-acid reductoisomerase, mitochondrial"/>
    <property type="match status" value="1"/>
</dbReference>
<dbReference type="FunFam" id="1.10.1040.10:FF:000013">
    <property type="entry name" value="Ketol-acid reductoisomerase, mitochondrial"/>
    <property type="match status" value="1"/>
</dbReference>
<dbReference type="FunFam" id="3.40.50.720:FF:000167">
    <property type="entry name" value="Ketol-acid reductoisomerase, mitochondrial"/>
    <property type="match status" value="1"/>
</dbReference>
<dbReference type="Gene3D" id="1.10.1040.10">
    <property type="entry name" value="N-(1-d-carboxylethyl)-l-norvaline Dehydrogenase, domain 2"/>
    <property type="match status" value="3"/>
</dbReference>
<dbReference type="Gene3D" id="3.40.50.720">
    <property type="entry name" value="NAD(P)-binding Rossmann-like Domain"/>
    <property type="match status" value="1"/>
</dbReference>
<dbReference type="InterPro" id="IPR008927">
    <property type="entry name" value="6-PGluconate_DH-like_C_sf"/>
</dbReference>
<dbReference type="InterPro" id="IPR013328">
    <property type="entry name" value="6PGD_dom2"/>
</dbReference>
<dbReference type="InterPro" id="IPR013023">
    <property type="entry name" value="KARI"/>
</dbReference>
<dbReference type="InterPro" id="IPR000506">
    <property type="entry name" value="KARI_C"/>
</dbReference>
<dbReference type="InterPro" id="IPR013116">
    <property type="entry name" value="KARI_N"/>
</dbReference>
<dbReference type="InterPro" id="IPR016207">
    <property type="entry name" value="KetolA_reductoisomerase_fun"/>
</dbReference>
<dbReference type="InterPro" id="IPR036291">
    <property type="entry name" value="NAD(P)-bd_dom_sf"/>
</dbReference>
<dbReference type="NCBIfam" id="TIGR00465">
    <property type="entry name" value="ilvC"/>
    <property type="match status" value="1"/>
</dbReference>
<dbReference type="PANTHER" id="PTHR21371">
    <property type="entry name" value="KETOL-ACID REDUCTOISOMERASE, MITOCHONDRIAL"/>
    <property type="match status" value="1"/>
</dbReference>
<dbReference type="PANTHER" id="PTHR21371:SF1">
    <property type="entry name" value="KETOL-ACID REDUCTOISOMERASE, MITOCHONDRIAL"/>
    <property type="match status" value="1"/>
</dbReference>
<dbReference type="Pfam" id="PF01450">
    <property type="entry name" value="KARI_C"/>
    <property type="match status" value="1"/>
</dbReference>
<dbReference type="Pfam" id="PF07991">
    <property type="entry name" value="KARI_N"/>
    <property type="match status" value="1"/>
</dbReference>
<dbReference type="PIRSF" id="PIRSF000119">
    <property type="entry name" value="Ilv5_fungal"/>
    <property type="match status" value="1"/>
</dbReference>
<dbReference type="SUPFAM" id="SSF48179">
    <property type="entry name" value="6-phosphogluconate dehydrogenase C-terminal domain-like"/>
    <property type="match status" value="1"/>
</dbReference>
<dbReference type="SUPFAM" id="SSF51735">
    <property type="entry name" value="NAD(P)-binding Rossmann-fold domains"/>
    <property type="match status" value="1"/>
</dbReference>
<dbReference type="PROSITE" id="PS51851">
    <property type="entry name" value="KARI_C"/>
    <property type="match status" value="1"/>
</dbReference>
<dbReference type="PROSITE" id="PS51850">
    <property type="entry name" value="KARI_N"/>
    <property type="match status" value="1"/>
</dbReference>
<accession>P38674</accession>
<accession>Q7RVD5</accession>
<accession>Q8X0I9</accession>
<keyword id="KW-0028">Amino-acid biosynthesis</keyword>
<keyword id="KW-0100">Branched-chain amino acid biosynthesis</keyword>
<keyword id="KW-0460">Magnesium</keyword>
<keyword id="KW-0479">Metal-binding</keyword>
<keyword id="KW-0496">Mitochondrion</keyword>
<keyword id="KW-0521">NADP</keyword>
<keyword id="KW-0560">Oxidoreductase</keyword>
<keyword id="KW-1185">Reference proteome</keyword>
<keyword id="KW-0809">Transit peptide</keyword>
<protein>
    <recommendedName>
        <fullName>Ketol-acid reductoisomerase, mitochondrial</fullName>
        <ecNumber>1.1.1.86</ecNumber>
    </recommendedName>
    <alternativeName>
        <fullName>Acetohydroxy-acid reductoisomerase</fullName>
    </alternativeName>
    <alternativeName>
        <fullName>Alpha-keto-beta-hydroxylacyl reductoisomerase</fullName>
    </alternativeName>
</protein>
<evidence type="ECO:0000250" key="1"/>
<evidence type="ECO:0000255" key="2"/>
<evidence type="ECO:0000255" key="3">
    <source>
        <dbReference type="PROSITE-ProRule" id="PRU01197"/>
    </source>
</evidence>
<evidence type="ECO:0000255" key="4">
    <source>
        <dbReference type="PROSITE-ProRule" id="PRU01198"/>
    </source>
</evidence>
<evidence type="ECO:0000305" key="5"/>